<reference key="1">
    <citation type="journal article" date="1991" name="Virus Res.">
        <title>The cloning and sequencing of the virion protein genes from a British isolate of porcine respiratory coronavirus: comparison with transmissible gastroenteritis virus genes.</title>
        <authorList>
            <person name="Britton P."/>
            <person name="Mawditt K.L."/>
            <person name="Page K.W."/>
        </authorList>
    </citation>
    <scope>NUCLEOTIDE SEQUENCE [GENOMIC RNA]</scope>
</reference>
<accession>P69611</accession>
<accession>P24415</accession>
<keyword id="KW-0053">Apoptosis</keyword>
<keyword id="KW-1040">Host Golgi apparatus</keyword>
<keyword id="KW-1043">Host membrane</keyword>
<keyword id="KW-0472">Membrane</keyword>
<keyword id="KW-0812">Transmembrane</keyword>
<keyword id="KW-1133">Transmembrane helix</keyword>
<name>VEMP_CVPR8</name>
<sequence length="82" mass="9268">MTFPRALTVIDDNGMVISIIFWFLLIIILILLSIALLNIIKLCMVCCNLGRTVIIVPVQHAYDAYKNFMRIKAYNPDGALLV</sequence>
<gene>
    <name evidence="1" type="primary">E</name>
    <name type="synonym">NS4</name>
</gene>
<comment type="function">
    <text evidence="1">Plays a central role in virus morphogenesis and assembly. Acts as a viroporin and self-assembles in host membranes forming pentameric protein-lipid pores that allow ion transport. Also plays a role in the induction of apoptosis.</text>
</comment>
<comment type="subunit">
    <text evidence="1">Homopentamer. Interacts with membrane protein M in the budding compartment of the host cell, which is located between endoplasmic reticulum and the Golgi complex. Interacts with Nucleoprotein.</text>
</comment>
<comment type="subcellular location">
    <subcellularLocation>
        <location evidence="1">Host Golgi apparatus membrane</location>
        <topology evidence="1">Single-pass type III membrane protein</topology>
    </subcellularLocation>
    <text evidence="1">The cytoplasmic tail functions as a Golgi complex-targeting signal.</text>
</comment>
<comment type="similarity">
    <text evidence="1">Belongs to the alphacoronaviruses E protein family.</text>
</comment>
<feature type="chain" id="PRO_0000106093" description="Envelope small membrane protein">
    <location>
        <begin position="1"/>
        <end position="82"/>
    </location>
</feature>
<feature type="topological domain" description="Virion surface" evidence="1">
    <location>
        <begin position="1"/>
        <end position="19"/>
    </location>
</feature>
<feature type="transmembrane region" description="Helical" evidence="1">
    <location>
        <begin position="20"/>
        <end position="40"/>
    </location>
</feature>
<feature type="topological domain" description="Intravirion" evidence="1">
    <location>
        <begin position="41"/>
        <end position="82"/>
    </location>
</feature>
<proteinExistence type="inferred from homology"/>
<organismHost>
    <name type="scientific">Sus scrofa</name>
    <name type="common">Pig</name>
    <dbReference type="NCBI Taxonomy" id="9823"/>
</organismHost>
<dbReference type="EMBL" id="X55980">
    <property type="protein sequence ID" value="CAA39451.1"/>
    <property type="molecule type" value="Genomic_RNA"/>
</dbReference>
<dbReference type="EMBL" id="X60056">
    <property type="protein sequence ID" value="CAA42655.1"/>
    <property type="molecule type" value="Genomic_RNA"/>
</dbReference>
<dbReference type="PIR" id="S24280">
    <property type="entry name" value="S24280"/>
</dbReference>
<dbReference type="GO" id="GO:0044178">
    <property type="term" value="C:host cell Golgi membrane"/>
    <property type="evidence" value="ECO:0007669"/>
    <property type="project" value="UniProtKB-SubCell"/>
</dbReference>
<dbReference type="GO" id="GO:0016020">
    <property type="term" value="C:membrane"/>
    <property type="evidence" value="ECO:0007669"/>
    <property type="project" value="UniProtKB-UniRule"/>
</dbReference>
<dbReference type="GO" id="GO:0140975">
    <property type="term" value="P:disruption of cellular anatomical structure in another organism"/>
    <property type="evidence" value="ECO:0007669"/>
    <property type="project" value="UniProtKB-UniRule"/>
</dbReference>
<dbReference type="GO" id="GO:0046760">
    <property type="term" value="P:viral budding from Golgi membrane"/>
    <property type="evidence" value="ECO:0007669"/>
    <property type="project" value="UniProtKB-UniRule"/>
</dbReference>
<dbReference type="HAMAP" id="MF_04205">
    <property type="entry name" value="ALPHA_CORONA_E"/>
    <property type="match status" value="1"/>
</dbReference>
<dbReference type="InterPro" id="IPR043507">
    <property type="entry name" value="E_protein_aCoV"/>
</dbReference>
<dbReference type="InterPro" id="IPR003873">
    <property type="entry name" value="E_protein_CoV"/>
</dbReference>
<dbReference type="Pfam" id="PF02723">
    <property type="entry name" value="CoV_E"/>
    <property type="match status" value="1"/>
</dbReference>
<dbReference type="PROSITE" id="PS51926">
    <property type="entry name" value="COV_E"/>
    <property type="match status" value="1"/>
</dbReference>
<protein>
    <recommendedName>
        <fullName evidence="1">Envelope small membrane protein</fullName>
        <shortName evidence="1">E protein</shortName>
        <shortName evidence="1">sM protein</shortName>
    </recommendedName>
</protein>
<evidence type="ECO:0000255" key="1">
    <source>
        <dbReference type="HAMAP-Rule" id="MF_04205"/>
    </source>
</evidence>
<organism>
    <name type="scientific">Porcine respiratory coronavirus (strain 86/137004 / isolate British)</name>
    <name type="common">PRCoV</name>
    <name type="synonym">PRCV</name>
    <dbReference type="NCBI Taxonomy" id="33736"/>
    <lineage>
        <taxon>Viruses</taxon>
        <taxon>Riboviria</taxon>
        <taxon>Orthornavirae</taxon>
        <taxon>Pisuviricota</taxon>
        <taxon>Pisoniviricetes</taxon>
        <taxon>Nidovirales</taxon>
        <taxon>Cornidovirineae</taxon>
        <taxon>Coronaviridae</taxon>
        <taxon>Orthocoronavirinae</taxon>
        <taxon>Alphacoronavirus</taxon>
        <taxon>Tegacovirus</taxon>
        <taxon>Alphacoronavirus 1</taxon>
    </lineage>
</organism>